<proteinExistence type="evidence at protein level"/>
<keyword id="KW-0027">Amidation</keyword>
<keyword id="KW-0903">Direct protein sequencing</keyword>
<keyword id="KW-0372">Hormone</keyword>
<keyword id="KW-0873">Pyrrolidone carboxylic acid</keyword>
<keyword id="KW-0964">Secreted</keyword>
<comment type="function">
    <text>Stimulates the secretion of gonadotropins; it stimulates the secretion of both luteinizing and follicle-stimulating hormones.</text>
</comment>
<comment type="subcellular location">
    <subcellularLocation>
        <location>Secreted</location>
    </subcellularLocation>
</comment>
<comment type="tissue specificity">
    <text>GNRH neurons lie within blood sinuses close to the gonoducts and gonads in both juveniles and adults, implying that the neuropeptide is released into the bloodstream.</text>
</comment>
<comment type="mass spectrometry" mass="1246.56" method="MALDI" evidence="2"/>
<comment type="similarity">
    <text evidence="3">Belongs to the GnRH family.</text>
</comment>
<accession>P80677</accession>
<evidence type="ECO:0000250" key="1"/>
<evidence type="ECO:0000269" key="2">
    <source>
    </source>
</evidence>
<evidence type="ECO:0000305" key="3"/>
<reference key="1">
    <citation type="journal article" date="1996" name="Proc. Natl. Acad. Sci. U.S.A.">
        <title>Two new forms of gonadotropin-releasing hormone in a protochordate and the evolutionary implications.</title>
        <authorList>
            <person name="Powell J.F.F."/>
            <person name="Reska-Skinner S.M."/>
            <person name="Prakash M.O."/>
            <person name="Fischer W.H."/>
            <person name="Park M."/>
            <person name="Rivier J.E."/>
            <person name="Craig A.G."/>
            <person name="Mackie G.O."/>
            <person name="Sherwood N.M."/>
        </authorList>
    </citation>
    <scope>PROTEIN SEQUENCE</scope>
    <scope>PYROGLUTAMATE FORMATION AT GLN-1</scope>
    <scope>MASS SPECTROMETRY</scope>
</reference>
<name>GON1_CHEPR</name>
<dbReference type="GO" id="GO:0005576">
    <property type="term" value="C:extracellular region"/>
    <property type="evidence" value="ECO:0007669"/>
    <property type="project" value="UniProtKB-SubCell"/>
</dbReference>
<dbReference type="GO" id="GO:0005179">
    <property type="term" value="F:hormone activity"/>
    <property type="evidence" value="ECO:0007669"/>
    <property type="project" value="UniProtKB-KW"/>
</dbReference>
<dbReference type="InterPro" id="IPR002012">
    <property type="entry name" value="GnRH"/>
</dbReference>
<dbReference type="PROSITE" id="PS00473">
    <property type="entry name" value="GNRH"/>
    <property type="match status" value="1"/>
</dbReference>
<protein>
    <recommendedName>
        <fullName>Gonadoliberin-1</fullName>
    </recommendedName>
    <alternativeName>
        <fullName>Gonadoliberin I</fullName>
    </alternativeName>
    <alternativeName>
        <fullName>Gonadotropin-releasing hormone I</fullName>
        <shortName>GnRH-I</shortName>
    </alternativeName>
    <alternativeName>
        <fullName>Luliberin I</fullName>
    </alternativeName>
</protein>
<feature type="peptide" id="PRO_0000043956" description="Gonadoliberin-1">
    <location>
        <begin position="1"/>
        <end position="10"/>
    </location>
</feature>
<feature type="modified residue" description="Pyrrolidone carboxylic acid" evidence="2">
    <location>
        <position position="1"/>
    </location>
</feature>
<feature type="modified residue" description="Glycine amide" evidence="1">
    <location>
        <position position="10"/>
    </location>
</feature>
<organism>
    <name type="scientific">Chelyosoma productum</name>
    <name type="common">Solitary ascidian</name>
    <dbReference type="NCBI Taxonomy" id="71177"/>
    <lineage>
        <taxon>Eukaryota</taxon>
        <taxon>Metazoa</taxon>
        <taxon>Chordata</taxon>
        <taxon>Tunicata</taxon>
        <taxon>Ascidiacea</taxon>
        <taxon>Phlebobranchia</taxon>
        <taxon>Corellidae</taxon>
        <taxon>Chelyosoma</taxon>
    </lineage>
</organism>
<sequence length="10" mass="1264">QHWSDYFKPG</sequence>